<dbReference type="EC" id="7.1.2.2" evidence="1"/>
<dbReference type="EMBL" id="AB237912">
    <property type="protein sequence ID" value="BAE46632.1"/>
    <property type="molecule type" value="Genomic_DNA"/>
</dbReference>
<dbReference type="RefSeq" id="YP_358657.1">
    <property type="nucleotide sequence ID" value="NC_007500.1"/>
</dbReference>
<dbReference type="SMR" id="Q3C1H4"/>
<dbReference type="GeneID" id="3735049"/>
<dbReference type="KEGG" id="nsy:3735049"/>
<dbReference type="OrthoDB" id="10260at4085"/>
<dbReference type="Proteomes" id="UP000189701">
    <property type="component" value="Chloroplast Pltd"/>
</dbReference>
<dbReference type="GO" id="GO:0009535">
    <property type="term" value="C:chloroplast thylakoid membrane"/>
    <property type="evidence" value="ECO:0007669"/>
    <property type="project" value="UniProtKB-SubCell"/>
</dbReference>
<dbReference type="GO" id="GO:0045259">
    <property type="term" value="C:proton-transporting ATP synthase complex"/>
    <property type="evidence" value="ECO:0007669"/>
    <property type="project" value="UniProtKB-KW"/>
</dbReference>
<dbReference type="GO" id="GO:0043531">
    <property type="term" value="F:ADP binding"/>
    <property type="evidence" value="ECO:0007669"/>
    <property type="project" value="TreeGrafter"/>
</dbReference>
<dbReference type="GO" id="GO:0005524">
    <property type="term" value="F:ATP binding"/>
    <property type="evidence" value="ECO:0007669"/>
    <property type="project" value="UniProtKB-UniRule"/>
</dbReference>
<dbReference type="GO" id="GO:0046933">
    <property type="term" value="F:proton-transporting ATP synthase activity, rotational mechanism"/>
    <property type="evidence" value="ECO:0007669"/>
    <property type="project" value="UniProtKB-UniRule"/>
</dbReference>
<dbReference type="CDD" id="cd18113">
    <property type="entry name" value="ATP-synt_F1_alpha_C"/>
    <property type="match status" value="1"/>
</dbReference>
<dbReference type="CDD" id="cd18116">
    <property type="entry name" value="ATP-synt_F1_alpha_N"/>
    <property type="match status" value="1"/>
</dbReference>
<dbReference type="CDD" id="cd01132">
    <property type="entry name" value="F1-ATPase_alpha_CD"/>
    <property type="match status" value="1"/>
</dbReference>
<dbReference type="FunFam" id="1.20.150.20:FF:000001">
    <property type="entry name" value="ATP synthase subunit alpha"/>
    <property type="match status" value="1"/>
</dbReference>
<dbReference type="FunFam" id="2.40.30.20:FF:000001">
    <property type="entry name" value="ATP synthase subunit alpha"/>
    <property type="match status" value="1"/>
</dbReference>
<dbReference type="FunFam" id="3.40.50.300:FF:000002">
    <property type="entry name" value="ATP synthase subunit alpha"/>
    <property type="match status" value="1"/>
</dbReference>
<dbReference type="Gene3D" id="2.40.30.20">
    <property type="match status" value="1"/>
</dbReference>
<dbReference type="Gene3D" id="1.20.150.20">
    <property type="entry name" value="ATP synthase alpha/beta chain, C-terminal domain"/>
    <property type="match status" value="1"/>
</dbReference>
<dbReference type="Gene3D" id="3.40.50.300">
    <property type="entry name" value="P-loop containing nucleotide triphosphate hydrolases"/>
    <property type="match status" value="1"/>
</dbReference>
<dbReference type="HAMAP" id="MF_01346">
    <property type="entry name" value="ATP_synth_alpha_bact"/>
    <property type="match status" value="1"/>
</dbReference>
<dbReference type="InterPro" id="IPR023366">
    <property type="entry name" value="ATP_synth_asu-like_sf"/>
</dbReference>
<dbReference type="InterPro" id="IPR000793">
    <property type="entry name" value="ATP_synth_asu_C"/>
</dbReference>
<dbReference type="InterPro" id="IPR038376">
    <property type="entry name" value="ATP_synth_asu_C_sf"/>
</dbReference>
<dbReference type="InterPro" id="IPR033732">
    <property type="entry name" value="ATP_synth_F1_a_nt-bd_dom"/>
</dbReference>
<dbReference type="InterPro" id="IPR005294">
    <property type="entry name" value="ATP_synth_F1_asu"/>
</dbReference>
<dbReference type="InterPro" id="IPR020003">
    <property type="entry name" value="ATPase_a/bsu_AS"/>
</dbReference>
<dbReference type="InterPro" id="IPR004100">
    <property type="entry name" value="ATPase_F1/V1/A1_a/bsu_N"/>
</dbReference>
<dbReference type="InterPro" id="IPR036121">
    <property type="entry name" value="ATPase_F1/V1/A1_a/bsu_N_sf"/>
</dbReference>
<dbReference type="InterPro" id="IPR000194">
    <property type="entry name" value="ATPase_F1/V1/A1_a/bsu_nucl-bd"/>
</dbReference>
<dbReference type="InterPro" id="IPR027417">
    <property type="entry name" value="P-loop_NTPase"/>
</dbReference>
<dbReference type="NCBIfam" id="TIGR00962">
    <property type="entry name" value="atpA"/>
    <property type="match status" value="1"/>
</dbReference>
<dbReference type="NCBIfam" id="NF009884">
    <property type="entry name" value="PRK13343.1"/>
    <property type="match status" value="1"/>
</dbReference>
<dbReference type="PANTHER" id="PTHR48082">
    <property type="entry name" value="ATP SYNTHASE SUBUNIT ALPHA, MITOCHONDRIAL"/>
    <property type="match status" value="1"/>
</dbReference>
<dbReference type="PANTHER" id="PTHR48082:SF2">
    <property type="entry name" value="ATP SYNTHASE SUBUNIT ALPHA, MITOCHONDRIAL"/>
    <property type="match status" value="1"/>
</dbReference>
<dbReference type="Pfam" id="PF00006">
    <property type="entry name" value="ATP-synt_ab"/>
    <property type="match status" value="1"/>
</dbReference>
<dbReference type="Pfam" id="PF00306">
    <property type="entry name" value="ATP-synt_ab_C"/>
    <property type="match status" value="1"/>
</dbReference>
<dbReference type="Pfam" id="PF02874">
    <property type="entry name" value="ATP-synt_ab_N"/>
    <property type="match status" value="1"/>
</dbReference>
<dbReference type="PIRSF" id="PIRSF039088">
    <property type="entry name" value="F_ATPase_subunit_alpha"/>
    <property type="match status" value="1"/>
</dbReference>
<dbReference type="SUPFAM" id="SSF47917">
    <property type="entry name" value="C-terminal domain of alpha and beta subunits of F1 ATP synthase"/>
    <property type="match status" value="1"/>
</dbReference>
<dbReference type="SUPFAM" id="SSF50615">
    <property type="entry name" value="N-terminal domain of alpha and beta subunits of F1 ATP synthase"/>
    <property type="match status" value="1"/>
</dbReference>
<dbReference type="SUPFAM" id="SSF52540">
    <property type="entry name" value="P-loop containing nucleoside triphosphate hydrolases"/>
    <property type="match status" value="1"/>
</dbReference>
<dbReference type="PROSITE" id="PS00152">
    <property type="entry name" value="ATPASE_ALPHA_BETA"/>
    <property type="match status" value="1"/>
</dbReference>
<organism>
    <name type="scientific">Nicotiana sylvestris</name>
    <name type="common">Wood tobacco</name>
    <name type="synonym">South American tobacco</name>
    <dbReference type="NCBI Taxonomy" id="4096"/>
    <lineage>
        <taxon>Eukaryota</taxon>
        <taxon>Viridiplantae</taxon>
        <taxon>Streptophyta</taxon>
        <taxon>Embryophyta</taxon>
        <taxon>Tracheophyta</taxon>
        <taxon>Spermatophyta</taxon>
        <taxon>Magnoliopsida</taxon>
        <taxon>eudicotyledons</taxon>
        <taxon>Gunneridae</taxon>
        <taxon>Pentapetalae</taxon>
        <taxon>asterids</taxon>
        <taxon>lamiids</taxon>
        <taxon>Solanales</taxon>
        <taxon>Solanaceae</taxon>
        <taxon>Nicotianoideae</taxon>
        <taxon>Nicotianeae</taxon>
        <taxon>Nicotiana</taxon>
    </lineage>
</organism>
<comment type="function">
    <text evidence="1">Produces ATP from ADP in the presence of a proton gradient across the membrane. The alpha chain is a regulatory subunit.</text>
</comment>
<comment type="catalytic activity">
    <reaction evidence="1">
        <text>ATP + H2O + 4 H(+)(in) = ADP + phosphate + 5 H(+)(out)</text>
        <dbReference type="Rhea" id="RHEA:57720"/>
        <dbReference type="ChEBI" id="CHEBI:15377"/>
        <dbReference type="ChEBI" id="CHEBI:15378"/>
        <dbReference type="ChEBI" id="CHEBI:30616"/>
        <dbReference type="ChEBI" id="CHEBI:43474"/>
        <dbReference type="ChEBI" id="CHEBI:456216"/>
        <dbReference type="EC" id="7.1.2.2"/>
    </reaction>
</comment>
<comment type="subunit">
    <text evidence="1">F-type ATPases have 2 components, CF(1) - the catalytic core - and CF(0) - the membrane proton channel. CF(1) has five subunits: alpha(3), beta(3), gamma(1), delta(1), epsilon(1). CF(0) has four main subunits: a, b, b' and c.</text>
</comment>
<comment type="subcellular location">
    <subcellularLocation>
        <location evidence="1">Plastid</location>
        <location evidence="1">Chloroplast thylakoid membrane</location>
        <topology evidence="1">Peripheral membrane protein</topology>
    </subcellularLocation>
</comment>
<comment type="similarity">
    <text evidence="1">Belongs to the ATPase alpha/beta chains family.</text>
</comment>
<geneLocation type="chloroplast"/>
<name>ATPA_NICSY</name>
<accession>Q3C1H4</accession>
<keyword id="KW-0066">ATP synthesis</keyword>
<keyword id="KW-0067">ATP-binding</keyword>
<keyword id="KW-0139">CF(1)</keyword>
<keyword id="KW-0150">Chloroplast</keyword>
<keyword id="KW-0375">Hydrogen ion transport</keyword>
<keyword id="KW-0406">Ion transport</keyword>
<keyword id="KW-0472">Membrane</keyword>
<keyword id="KW-0547">Nucleotide-binding</keyword>
<keyword id="KW-0934">Plastid</keyword>
<keyword id="KW-1185">Reference proteome</keyword>
<keyword id="KW-0793">Thylakoid</keyword>
<keyword id="KW-1278">Translocase</keyword>
<keyword id="KW-0813">Transport</keyword>
<feature type="chain" id="PRO_0000238427" description="ATP synthase subunit alpha, chloroplastic">
    <location>
        <begin position="1"/>
        <end position="507"/>
    </location>
</feature>
<feature type="binding site" evidence="1">
    <location>
        <begin position="170"/>
        <end position="177"/>
    </location>
    <ligand>
        <name>ATP</name>
        <dbReference type="ChEBI" id="CHEBI:30616"/>
    </ligand>
</feature>
<feature type="site" description="Required for activity" evidence="1">
    <location>
        <position position="363"/>
    </location>
</feature>
<sequence length="507" mass="55422">MVTIRADEISNIIRERIEQYNREVKIVNTGTVLQVGDGIARIHGLDEVMAGELVEFEEGTIGIALNLESNNVGVVLMGDGLLIQEGSSVKATGRIAQIPVSEAYLGRVINALAKPIDGRGEISASEFRLIESAAPGIISRRSVYEPLQTGLIAIDSMIPIGRGQRELIIGDRQTGKTAVATDTILNQQGQNVICVYVAIGQKASSVAQVVTTLQERGAMEYTIVVAETADSPATLQYLAPYTGAALAEYFMYRERHTLIIYDDPSKQAQAYRQMSLLLRRPPGREAYPGDVFYLHSRLLERAAKLSSSLGEGSMTALPIVETQSGDVSAYIPTNVISITDGQIFLSADLFNSGIRPAINVGISVSRVGSAAQIKAMKQVAGKLKLELAQFAELEAFAQFASDLDKATQNQLARGQRLRELLKQSQSAPLTVEEQIMTIYTGTNGYLDSLEVGQVRKFLVELRTYLKTNKPQFQEIISSTKTFTEEAEALLKEAIQEQMDRFILQEQA</sequence>
<gene>
    <name evidence="1" type="primary">atpA</name>
</gene>
<reference key="1">
    <citation type="journal article" date="2006" name="Mol. Genet. Genomics">
        <title>The chloroplast genome of Nicotiana sylvestris and Nicotiana tomentosiformis: complete sequencing confirms that the Nicotiana sylvestris progenitor is the maternal genome donor of Nicotiana tabacum.</title>
        <authorList>
            <person name="Yukawa M."/>
            <person name="Tsudzuki T."/>
            <person name="Sugiura M."/>
        </authorList>
    </citation>
    <scope>NUCLEOTIDE SEQUENCE [LARGE SCALE GENOMIC DNA]</scope>
</reference>
<evidence type="ECO:0000255" key="1">
    <source>
        <dbReference type="HAMAP-Rule" id="MF_01346"/>
    </source>
</evidence>
<proteinExistence type="inferred from homology"/>
<protein>
    <recommendedName>
        <fullName evidence="1">ATP synthase subunit alpha, chloroplastic</fullName>
        <ecNumber evidence="1">7.1.2.2</ecNumber>
    </recommendedName>
    <alternativeName>
        <fullName evidence="1">ATP synthase F1 sector subunit alpha</fullName>
    </alternativeName>
    <alternativeName>
        <fullName evidence="1">F-ATPase subunit alpha</fullName>
    </alternativeName>
</protein>